<keyword id="KW-1015">Disulfide bond</keyword>
<keyword id="KW-0646">Protease inhibitor</keyword>
<keyword id="KW-0964">Secreted</keyword>
<keyword id="KW-0732">Signal</keyword>
<keyword id="KW-0789">Thiol protease inhibitor</keyword>
<proteinExistence type="evidence at transcript level"/>
<sequence>MKAIYLILTVLCGFSASTKTGGWRDKDVDDEDIRKFATLAASENSKMSNSLYFEKLVKVIEAKSQVVSGVKYNITFEIAPTECKKNGKGYDKLSECPLLESAPHQTCTAIIWTRSWLNDTQILKLKCKEGGSSC</sequence>
<feature type="signal peptide" evidence="4">
    <location>
        <begin position="1"/>
        <end position="17"/>
    </location>
</feature>
<feature type="chain" id="PRO_0000423036" description="Cystatin-1">
    <location>
        <begin position="18"/>
        <end position="134"/>
    </location>
</feature>
<feature type="domain" description="Cystatin">
    <location>
        <begin position="21"/>
        <end position="116"/>
    </location>
</feature>
<feature type="short sequence motif" description="Secondary area of contact" evidence="1">
    <location>
        <begin position="65"/>
        <end position="69"/>
    </location>
</feature>
<feature type="site" description="Reactive site" evidence="1">
    <location>
        <position position="21"/>
    </location>
</feature>
<feature type="disulfide bond" evidence="3">
    <location>
        <begin position="83"/>
        <end position="96"/>
    </location>
</feature>
<feature type="disulfide bond" evidence="3">
    <location>
        <begin position="107"/>
        <end position="127"/>
    </location>
</feature>
<protein>
    <recommendedName>
        <fullName>Cystatin-1</fullName>
    </recommendedName>
    <alternativeName>
        <fullName evidence="5">Cystatin JZTX-75</fullName>
    </alternativeName>
</protein>
<name>CYT_CHIGU</name>
<dbReference type="EMBL" id="EU233924">
    <property type="protein sequence ID" value="ABY71743.1"/>
    <property type="molecule type" value="mRNA"/>
</dbReference>
<dbReference type="SMR" id="B1P1J3"/>
<dbReference type="MEROPS" id="I25.043"/>
<dbReference type="ArachnoServer" id="AS001996">
    <property type="toxin name" value="Cystatin-1-Chilobrachys guangxiensis"/>
</dbReference>
<dbReference type="GO" id="GO:0005737">
    <property type="term" value="C:cytoplasm"/>
    <property type="evidence" value="ECO:0007669"/>
    <property type="project" value="TreeGrafter"/>
</dbReference>
<dbReference type="GO" id="GO:0005615">
    <property type="term" value="C:extracellular space"/>
    <property type="evidence" value="ECO:0007669"/>
    <property type="project" value="TreeGrafter"/>
</dbReference>
<dbReference type="GO" id="GO:0031982">
    <property type="term" value="C:vesicle"/>
    <property type="evidence" value="ECO:0007669"/>
    <property type="project" value="TreeGrafter"/>
</dbReference>
<dbReference type="GO" id="GO:0004869">
    <property type="term" value="F:cysteine-type endopeptidase inhibitor activity"/>
    <property type="evidence" value="ECO:0007669"/>
    <property type="project" value="UniProtKB-KW"/>
</dbReference>
<dbReference type="CDD" id="cd00042">
    <property type="entry name" value="CY"/>
    <property type="match status" value="1"/>
</dbReference>
<dbReference type="FunFam" id="3.10.450.10:FF:000004">
    <property type="entry name" value="Cystatin C"/>
    <property type="match status" value="1"/>
</dbReference>
<dbReference type="Gene3D" id="3.10.450.10">
    <property type="match status" value="1"/>
</dbReference>
<dbReference type="InterPro" id="IPR000010">
    <property type="entry name" value="Cystatin_dom"/>
</dbReference>
<dbReference type="InterPro" id="IPR046350">
    <property type="entry name" value="Cystatin_sf"/>
</dbReference>
<dbReference type="InterPro" id="IPR018073">
    <property type="entry name" value="Prot_inh_cystat_CS"/>
</dbReference>
<dbReference type="PANTHER" id="PTHR46186">
    <property type="entry name" value="CYSTATIN"/>
    <property type="match status" value="1"/>
</dbReference>
<dbReference type="PANTHER" id="PTHR46186:SF2">
    <property type="entry name" value="CYSTATIN"/>
    <property type="match status" value="1"/>
</dbReference>
<dbReference type="Pfam" id="PF00031">
    <property type="entry name" value="Cystatin"/>
    <property type="match status" value="1"/>
</dbReference>
<dbReference type="SMART" id="SM00043">
    <property type="entry name" value="CY"/>
    <property type="match status" value="1"/>
</dbReference>
<dbReference type="SUPFAM" id="SSF54403">
    <property type="entry name" value="Cystatin/monellin"/>
    <property type="match status" value="1"/>
</dbReference>
<dbReference type="PROSITE" id="PS00287">
    <property type="entry name" value="CYSTATIN"/>
    <property type="match status" value="1"/>
</dbReference>
<evidence type="ECO:0000250" key="1"/>
<evidence type="ECO:0000250" key="2">
    <source>
        <dbReference type="UniProtKB" id="E3P6N3"/>
    </source>
</evidence>
<evidence type="ECO:0000250" key="3">
    <source>
        <dbReference type="UniProtKB" id="P01034"/>
    </source>
</evidence>
<evidence type="ECO:0000255" key="4"/>
<evidence type="ECO:0000303" key="5">
    <source>
    </source>
</evidence>
<evidence type="ECO:0000305" key="6"/>
<evidence type="ECO:0000305" key="7">
    <source>
    </source>
</evidence>
<reference key="1">
    <citation type="journal article" date="2008" name="Cell. Mol. Life Sci.">
        <title>Molecular diversity and evolution of cystine knot toxins of the tarantula Chilobrachys jingzhao.</title>
        <authorList>
            <person name="Chen J."/>
            <person name="Deng M."/>
            <person name="He Q."/>
            <person name="Meng E."/>
            <person name="Jiang L."/>
            <person name="Liao Z."/>
            <person name="Rong M."/>
            <person name="Liang S."/>
        </authorList>
    </citation>
    <scope>NUCLEOTIDE SEQUENCE [MRNA]</scope>
    <source>
        <tissue>Venom gland</tissue>
    </source>
</reference>
<accession>B1P1J3</accession>
<organism>
    <name type="scientific">Chilobrachys guangxiensis</name>
    <name type="common">Chinese earth tiger tarantula</name>
    <name type="synonym">Chilobrachys jingzhao</name>
    <dbReference type="NCBI Taxonomy" id="278060"/>
    <lineage>
        <taxon>Eukaryota</taxon>
        <taxon>Metazoa</taxon>
        <taxon>Ecdysozoa</taxon>
        <taxon>Arthropoda</taxon>
        <taxon>Chelicerata</taxon>
        <taxon>Arachnida</taxon>
        <taxon>Araneae</taxon>
        <taxon>Mygalomorphae</taxon>
        <taxon>Theraphosidae</taxon>
        <taxon>Chilobrachys</taxon>
    </lineage>
</organism>
<comment type="function">
    <text evidence="2">Inhibits various C1 cysteine proteases. This protein has no toxic activity and its function in the venom is unknown. It may play a role as a housekeeping or regulatory protein.</text>
</comment>
<comment type="subcellular location">
    <subcellularLocation>
        <location evidence="7">Secreted</location>
    </subcellularLocation>
</comment>
<comment type="tissue specificity">
    <text evidence="7">Expressed by the venom gland.</text>
</comment>
<comment type="similarity">
    <text evidence="6">Belongs to the cystatin family.</text>
</comment>